<reference key="1">
    <citation type="journal article" date="2006" name="J. Bacteriol.">
        <title>Genome sequence of Aeromonas hydrophila ATCC 7966T: jack of all trades.</title>
        <authorList>
            <person name="Seshadri R."/>
            <person name="Joseph S.W."/>
            <person name="Chopra A.K."/>
            <person name="Sha J."/>
            <person name="Shaw J."/>
            <person name="Graf J."/>
            <person name="Haft D.H."/>
            <person name="Wu M."/>
            <person name="Ren Q."/>
            <person name="Rosovitz M.J."/>
            <person name="Madupu R."/>
            <person name="Tallon L."/>
            <person name="Kim M."/>
            <person name="Jin S."/>
            <person name="Vuong H."/>
            <person name="Stine O.C."/>
            <person name="Ali A."/>
            <person name="Horneman A.J."/>
            <person name="Heidelberg J.F."/>
        </authorList>
    </citation>
    <scope>NUCLEOTIDE SEQUENCE [LARGE SCALE GENOMIC DNA]</scope>
    <source>
        <strain>ATCC 7966 / DSM 30187 / BCRC 13018 / CCUG 14551 / JCM 1027 / KCTC 2358 / NCIMB 9240 / NCTC 8049</strain>
    </source>
</reference>
<evidence type="ECO:0000255" key="1">
    <source>
        <dbReference type="HAMAP-Rule" id="MF_00034"/>
    </source>
</evidence>
<protein>
    <recommendedName>
        <fullName evidence="1">Crossover junction endodeoxyribonuclease RuvC</fullName>
        <ecNumber evidence="1">3.1.21.10</ecNumber>
    </recommendedName>
    <alternativeName>
        <fullName evidence="1">Holliday junction nuclease RuvC</fullName>
    </alternativeName>
    <alternativeName>
        <fullName evidence="1">Holliday junction resolvase RuvC</fullName>
    </alternativeName>
</protein>
<organism>
    <name type="scientific">Aeromonas hydrophila subsp. hydrophila (strain ATCC 7966 / DSM 30187 / BCRC 13018 / CCUG 14551 / JCM 1027 / KCTC 2358 / NCIMB 9240 / NCTC 8049)</name>
    <dbReference type="NCBI Taxonomy" id="380703"/>
    <lineage>
        <taxon>Bacteria</taxon>
        <taxon>Pseudomonadati</taxon>
        <taxon>Pseudomonadota</taxon>
        <taxon>Gammaproteobacteria</taxon>
        <taxon>Aeromonadales</taxon>
        <taxon>Aeromonadaceae</taxon>
        <taxon>Aeromonas</taxon>
    </lineage>
</organism>
<sequence length="173" mass="18393">MSIILGIDPGSRITGYGVIRIVAGKAEYLGSGCIRTDLGELPSRLKQVYDGVSEIITQFKPDEFAIERVFMARNADSALKLGQARGSAIVAAVNALLPVSEYSATQIKQAVVGTGGAAKEQVQHMVTHLLKLSATPQADAADALGVALCHFHTRQILIKMAGRSTGSVRGRYR</sequence>
<feature type="chain" id="PRO_1000002710" description="Crossover junction endodeoxyribonuclease RuvC">
    <location>
        <begin position="1"/>
        <end position="173"/>
    </location>
</feature>
<feature type="active site" evidence="1">
    <location>
        <position position="8"/>
    </location>
</feature>
<feature type="active site" evidence="1">
    <location>
        <position position="67"/>
    </location>
</feature>
<feature type="active site" evidence="1">
    <location>
        <position position="139"/>
    </location>
</feature>
<feature type="binding site" evidence="1">
    <location>
        <position position="8"/>
    </location>
    <ligand>
        <name>Mg(2+)</name>
        <dbReference type="ChEBI" id="CHEBI:18420"/>
        <label>1</label>
    </ligand>
</feature>
<feature type="binding site" evidence="1">
    <location>
        <position position="67"/>
    </location>
    <ligand>
        <name>Mg(2+)</name>
        <dbReference type="ChEBI" id="CHEBI:18420"/>
        <label>2</label>
    </ligand>
</feature>
<feature type="binding site" evidence="1">
    <location>
        <position position="139"/>
    </location>
    <ligand>
        <name>Mg(2+)</name>
        <dbReference type="ChEBI" id="CHEBI:18420"/>
        <label>1</label>
    </ligand>
</feature>
<keyword id="KW-0963">Cytoplasm</keyword>
<keyword id="KW-0227">DNA damage</keyword>
<keyword id="KW-0233">DNA recombination</keyword>
<keyword id="KW-0234">DNA repair</keyword>
<keyword id="KW-0238">DNA-binding</keyword>
<keyword id="KW-0255">Endonuclease</keyword>
<keyword id="KW-0378">Hydrolase</keyword>
<keyword id="KW-0460">Magnesium</keyword>
<keyword id="KW-0479">Metal-binding</keyword>
<keyword id="KW-0540">Nuclease</keyword>
<keyword id="KW-1185">Reference proteome</keyword>
<dbReference type="EC" id="3.1.21.10" evidence="1"/>
<dbReference type="EMBL" id="CP000462">
    <property type="protein sequence ID" value="ABK39733.1"/>
    <property type="molecule type" value="Genomic_DNA"/>
</dbReference>
<dbReference type="RefSeq" id="WP_005298649.1">
    <property type="nucleotide sequence ID" value="NC_008570.1"/>
</dbReference>
<dbReference type="RefSeq" id="YP_855842.1">
    <property type="nucleotide sequence ID" value="NC_008570.1"/>
</dbReference>
<dbReference type="SMR" id="A0KHU1"/>
<dbReference type="STRING" id="380703.AHA_1301"/>
<dbReference type="EnsemblBacteria" id="ABK39733">
    <property type="protein sequence ID" value="ABK39733"/>
    <property type="gene ID" value="AHA_1301"/>
</dbReference>
<dbReference type="GeneID" id="47846398"/>
<dbReference type="KEGG" id="aha:AHA_1301"/>
<dbReference type="PATRIC" id="fig|380703.7.peg.1310"/>
<dbReference type="eggNOG" id="COG0817">
    <property type="taxonomic scope" value="Bacteria"/>
</dbReference>
<dbReference type="HOGENOM" id="CLU_091257_2_1_6"/>
<dbReference type="OrthoDB" id="9805499at2"/>
<dbReference type="PRO" id="PR:A0KHU1"/>
<dbReference type="Proteomes" id="UP000000756">
    <property type="component" value="Chromosome"/>
</dbReference>
<dbReference type="GO" id="GO:0005737">
    <property type="term" value="C:cytoplasm"/>
    <property type="evidence" value="ECO:0007669"/>
    <property type="project" value="UniProtKB-SubCell"/>
</dbReference>
<dbReference type="GO" id="GO:0048476">
    <property type="term" value="C:Holliday junction resolvase complex"/>
    <property type="evidence" value="ECO:0007669"/>
    <property type="project" value="UniProtKB-UniRule"/>
</dbReference>
<dbReference type="GO" id="GO:0008821">
    <property type="term" value="F:crossover junction DNA endonuclease activity"/>
    <property type="evidence" value="ECO:0007669"/>
    <property type="project" value="UniProtKB-UniRule"/>
</dbReference>
<dbReference type="GO" id="GO:0003677">
    <property type="term" value="F:DNA binding"/>
    <property type="evidence" value="ECO:0007669"/>
    <property type="project" value="UniProtKB-KW"/>
</dbReference>
<dbReference type="GO" id="GO:0000287">
    <property type="term" value="F:magnesium ion binding"/>
    <property type="evidence" value="ECO:0007669"/>
    <property type="project" value="UniProtKB-UniRule"/>
</dbReference>
<dbReference type="GO" id="GO:0006310">
    <property type="term" value="P:DNA recombination"/>
    <property type="evidence" value="ECO:0007669"/>
    <property type="project" value="UniProtKB-UniRule"/>
</dbReference>
<dbReference type="GO" id="GO:0006281">
    <property type="term" value="P:DNA repair"/>
    <property type="evidence" value="ECO:0007669"/>
    <property type="project" value="UniProtKB-UniRule"/>
</dbReference>
<dbReference type="CDD" id="cd16962">
    <property type="entry name" value="RuvC"/>
    <property type="match status" value="1"/>
</dbReference>
<dbReference type="FunFam" id="3.30.420.10:FF:000002">
    <property type="entry name" value="Crossover junction endodeoxyribonuclease RuvC"/>
    <property type="match status" value="1"/>
</dbReference>
<dbReference type="Gene3D" id="3.30.420.10">
    <property type="entry name" value="Ribonuclease H-like superfamily/Ribonuclease H"/>
    <property type="match status" value="1"/>
</dbReference>
<dbReference type="HAMAP" id="MF_00034">
    <property type="entry name" value="RuvC"/>
    <property type="match status" value="1"/>
</dbReference>
<dbReference type="InterPro" id="IPR012337">
    <property type="entry name" value="RNaseH-like_sf"/>
</dbReference>
<dbReference type="InterPro" id="IPR036397">
    <property type="entry name" value="RNaseH_sf"/>
</dbReference>
<dbReference type="InterPro" id="IPR020563">
    <property type="entry name" value="X-over_junc_endoDNase_Mg_BS"/>
</dbReference>
<dbReference type="InterPro" id="IPR002176">
    <property type="entry name" value="X-over_junc_endoDNase_RuvC"/>
</dbReference>
<dbReference type="NCBIfam" id="TIGR00228">
    <property type="entry name" value="ruvC"/>
    <property type="match status" value="1"/>
</dbReference>
<dbReference type="PANTHER" id="PTHR30194">
    <property type="entry name" value="CROSSOVER JUNCTION ENDODEOXYRIBONUCLEASE RUVC"/>
    <property type="match status" value="1"/>
</dbReference>
<dbReference type="PANTHER" id="PTHR30194:SF3">
    <property type="entry name" value="CROSSOVER JUNCTION ENDODEOXYRIBONUCLEASE RUVC"/>
    <property type="match status" value="1"/>
</dbReference>
<dbReference type="Pfam" id="PF02075">
    <property type="entry name" value="RuvC"/>
    <property type="match status" value="1"/>
</dbReference>
<dbReference type="PRINTS" id="PR00696">
    <property type="entry name" value="RSOLVASERUVC"/>
</dbReference>
<dbReference type="SUPFAM" id="SSF53098">
    <property type="entry name" value="Ribonuclease H-like"/>
    <property type="match status" value="1"/>
</dbReference>
<dbReference type="PROSITE" id="PS01321">
    <property type="entry name" value="RUVC"/>
    <property type="match status" value="1"/>
</dbReference>
<comment type="function">
    <text evidence="1">The RuvA-RuvB-RuvC complex processes Holliday junction (HJ) DNA during genetic recombination and DNA repair. Endonuclease that resolves HJ intermediates. Cleaves cruciform DNA by making single-stranded nicks across the HJ at symmetrical positions within the homologous arms, yielding a 5'-phosphate and a 3'-hydroxyl group; requires a central core of homology in the junction. The consensus cleavage sequence is 5'-(A/T)TT(C/G)-3'. Cleavage occurs on the 3'-side of the TT dinucleotide at the point of strand exchange. HJ branch migration catalyzed by RuvA-RuvB allows RuvC to scan DNA until it finds its consensus sequence, where it cleaves and resolves the cruciform DNA.</text>
</comment>
<comment type="catalytic activity">
    <reaction evidence="1">
        <text>Endonucleolytic cleavage at a junction such as a reciprocal single-stranded crossover between two homologous DNA duplexes (Holliday junction).</text>
        <dbReference type="EC" id="3.1.21.10"/>
    </reaction>
</comment>
<comment type="cofactor">
    <cofactor evidence="1">
        <name>Mg(2+)</name>
        <dbReference type="ChEBI" id="CHEBI:18420"/>
    </cofactor>
    <text evidence="1">Binds 2 Mg(2+) ion per subunit.</text>
</comment>
<comment type="subunit">
    <text evidence="1">Homodimer which binds Holliday junction (HJ) DNA. The HJ becomes 2-fold symmetrical on binding to RuvC with unstacked arms; it has a different conformation from HJ DNA in complex with RuvA. In the full resolvosome a probable DNA-RuvA(4)-RuvB(12)-RuvC(2) complex forms which resolves the HJ.</text>
</comment>
<comment type="subcellular location">
    <subcellularLocation>
        <location evidence="1">Cytoplasm</location>
    </subcellularLocation>
</comment>
<comment type="similarity">
    <text evidence="1">Belongs to the RuvC family.</text>
</comment>
<accession>A0KHU1</accession>
<name>RUVC_AERHH</name>
<proteinExistence type="inferred from homology"/>
<gene>
    <name evidence="1" type="primary">ruvC</name>
    <name type="ordered locus">AHA_1301</name>
</gene>